<keyword id="KW-0378">Hydrolase</keyword>
<keyword id="KW-0460">Magnesium</keyword>
<keyword id="KW-0464">Manganese</keyword>
<keyword id="KW-0479">Metal-binding</keyword>
<keyword id="KW-0904">Protein phosphatase</keyword>
<keyword id="KW-1185">Reference proteome</keyword>
<organism>
    <name type="scientific">Oryza sativa subsp. japonica</name>
    <name type="common">Rice</name>
    <dbReference type="NCBI Taxonomy" id="39947"/>
    <lineage>
        <taxon>Eukaryota</taxon>
        <taxon>Viridiplantae</taxon>
        <taxon>Streptophyta</taxon>
        <taxon>Embryophyta</taxon>
        <taxon>Tracheophyta</taxon>
        <taxon>Spermatophyta</taxon>
        <taxon>Magnoliopsida</taxon>
        <taxon>Liliopsida</taxon>
        <taxon>Poales</taxon>
        <taxon>Poaceae</taxon>
        <taxon>BOP clade</taxon>
        <taxon>Oryzoideae</taxon>
        <taxon>Oryzeae</taxon>
        <taxon>Oryzinae</taxon>
        <taxon>Oryza</taxon>
        <taxon>Oryza sativa</taxon>
    </lineage>
</organism>
<evidence type="ECO:0000250" key="1"/>
<evidence type="ECO:0000255" key="2">
    <source>
        <dbReference type="PROSITE-ProRule" id="PRU01082"/>
    </source>
</evidence>
<evidence type="ECO:0000256" key="3">
    <source>
        <dbReference type="SAM" id="MobiDB-lite"/>
    </source>
</evidence>
<evidence type="ECO:0000305" key="4"/>
<comment type="catalytic activity">
    <reaction>
        <text>O-phospho-L-seryl-[protein] + H2O = L-seryl-[protein] + phosphate</text>
        <dbReference type="Rhea" id="RHEA:20629"/>
        <dbReference type="Rhea" id="RHEA-COMP:9863"/>
        <dbReference type="Rhea" id="RHEA-COMP:11604"/>
        <dbReference type="ChEBI" id="CHEBI:15377"/>
        <dbReference type="ChEBI" id="CHEBI:29999"/>
        <dbReference type="ChEBI" id="CHEBI:43474"/>
        <dbReference type="ChEBI" id="CHEBI:83421"/>
        <dbReference type="EC" id="3.1.3.16"/>
    </reaction>
</comment>
<comment type="catalytic activity">
    <reaction>
        <text>O-phospho-L-threonyl-[protein] + H2O = L-threonyl-[protein] + phosphate</text>
        <dbReference type="Rhea" id="RHEA:47004"/>
        <dbReference type="Rhea" id="RHEA-COMP:11060"/>
        <dbReference type="Rhea" id="RHEA-COMP:11605"/>
        <dbReference type="ChEBI" id="CHEBI:15377"/>
        <dbReference type="ChEBI" id="CHEBI:30013"/>
        <dbReference type="ChEBI" id="CHEBI:43474"/>
        <dbReference type="ChEBI" id="CHEBI:61977"/>
        <dbReference type="EC" id="3.1.3.16"/>
    </reaction>
</comment>
<comment type="cofactor">
    <cofactor evidence="1">
        <name>Mg(2+)</name>
        <dbReference type="ChEBI" id="CHEBI:18420"/>
    </cofactor>
    <cofactor evidence="1">
        <name>Mn(2+)</name>
        <dbReference type="ChEBI" id="CHEBI:29035"/>
    </cofactor>
    <text evidence="1">Binds 2 magnesium or manganese ions per subunit.</text>
</comment>
<comment type="similarity">
    <text evidence="4">Belongs to the PP2C family.</text>
</comment>
<protein>
    <recommendedName>
        <fullName>Probable protein phosphatase 2C 12</fullName>
        <shortName>OsPP2C12</shortName>
        <ecNumber>3.1.3.16</ecNumber>
    </recommendedName>
</protein>
<name>P2C12_ORYSJ</name>
<gene>
    <name type="ordered locus">Os02g0224100</name>
    <name type="ordered locus">LOC_Os02g13100</name>
    <name type="ORF">OsJ_005771</name>
    <name type="ORF">P0470A03.13-1</name>
</gene>
<feature type="chain" id="PRO_0000363258" description="Probable protein phosphatase 2C 12">
    <location>
        <begin position="1"/>
        <end position="389"/>
    </location>
</feature>
<feature type="domain" description="PPM-type phosphatase" evidence="2">
    <location>
        <begin position="42"/>
        <end position="356"/>
    </location>
</feature>
<feature type="region of interest" description="Disordered" evidence="3">
    <location>
        <begin position="119"/>
        <end position="145"/>
    </location>
</feature>
<feature type="compositionally biased region" description="Low complexity" evidence="3">
    <location>
        <begin position="121"/>
        <end position="145"/>
    </location>
</feature>
<feature type="binding site" evidence="1">
    <location>
        <position position="77"/>
    </location>
    <ligand>
        <name>Mn(2+)</name>
        <dbReference type="ChEBI" id="CHEBI:29035"/>
        <label>1</label>
    </ligand>
</feature>
<feature type="binding site" evidence="1">
    <location>
        <position position="77"/>
    </location>
    <ligand>
        <name>Mn(2+)</name>
        <dbReference type="ChEBI" id="CHEBI:29035"/>
        <label>2</label>
    </ligand>
</feature>
<feature type="binding site" evidence="1">
    <location>
        <position position="78"/>
    </location>
    <ligand>
        <name>Mn(2+)</name>
        <dbReference type="ChEBI" id="CHEBI:29035"/>
        <label>1</label>
    </ligand>
</feature>
<feature type="binding site" evidence="1">
    <location>
        <position position="301"/>
    </location>
    <ligand>
        <name>Mn(2+)</name>
        <dbReference type="ChEBI" id="CHEBI:29035"/>
        <label>2</label>
    </ligand>
</feature>
<feature type="binding site" evidence="1">
    <location>
        <position position="347"/>
    </location>
    <ligand>
        <name>Mn(2+)</name>
        <dbReference type="ChEBI" id="CHEBI:29035"/>
        <label>2</label>
    </ligand>
</feature>
<sequence length="389" mass="41006">MGICASSEQLEHVHETDESIVYVKDEQGRGGRGVESGGARKVASLFSQRGKKGPNQDSVILCQGFGMEDGVFCGVFDGHGRCGQFISKLVRDYLPFMILSHRNALLLADAAADDDDDAAFSDDAAASSSADSSGNSSPQPSASASAQMLEEWRQACASAFAAMDGELKLQPNLDCAFSGTTAVCAIKQGRDLIIANLGDSRAVLATMSDTGYLQAVQLTVDHKPSVPEEAARIKRSGGRVFGLKDEPGVMRVWLPGENSPGLAMARSLGDMRLKRHGVIPAPEVTSRRVTGADLFMVLATDGVWDVLSNEEVVSIVCATPRKQHASKAVVEAAVQRWRAKFPTSRVDDCSAVCLFLHDHTLGTAAAASAAAAAAARKARRASTATPPAS</sequence>
<reference key="1">
    <citation type="journal article" date="2005" name="Nature">
        <title>The map-based sequence of the rice genome.</title>
        <authorList>
            <consortium name="International rice genome sequencing project (IRGSP)"/>
        </authorList>
    </citation>
    <scope>NUCLEOTIDE SEQUENCE [LARGE SCALE GENOMIC DNA]</scope>
    <source>
        <strain>cv. Nipponbare</strain>
    </source>
</reference>
<reference key="2">
    <citation type="journal article" date="2008" name="Nucleic Acids Res.">
        <title>The rice annotation project database (RAP-DB): 2008 update.</title>
        <authorList>
            <consortium name="The rice annotation project (RAP)"/>
        </authorList>
    </citation>
    <scope>GENOME REANNOTATION</scope>
    <source>
        <strain>cv. Nipponbare</strain>
    </source>
</reference>
<reference key="3">
    <citation type="journal article" date="2013" name="Rice">
        <title>Improvement of the Oryza sativa Nipponbare reference genome using next generation sequence and optical map data.</title>
        <authorList>
            <person name="Kawahara Y."/>
            <person name="de la Bastide M."/>
            <person name="Hamilton J.P."/>
            <person name="Kanamori H."/>
            <person name="McCombie W.R."/>
            <person name="Ouyang S."/>
            <person name="Schwartz D.C."/>
            <person name="Tanaka T."/>
            <person name="Wu J."/>
            <person name="Zhou S."/>
            <person name="Childs K.L."/>
            <person name="Davidson R.M."/>
            <person name="Lin H."/>
            <person name="Quesada-Ocampo L."/>
            <person name="Vaillancourt B."/>
            <person name="Sakai H."/>
            <person name="Lee S.S."/>
            <person name="Kim J."/>
            <person name="Numa H."/>
            <person name="Itoh T."/>
            <person name="Buell C.R."/>
            <person name="Matsumoto T."/>
        </authorList>
    </citation>
    <scope>GENOME REANNOTATION</scope>
    <source>
        <strain>cv. Nipponbare</strain>
    </source>
</reference>
<reference key="4">
    <citation type="journal article" date="2005" name="PLoS Biol.">
        <title>The genomes of Oryza sativa: a history of duplications.</title>
        <authorList>
            <person name="Yu J."/>
            <person name="Wang J."/>
            <person name="Lin W."/>
            <person name="Li S."/>
            <person name="Li H."/>
            <person name="Zhou J."/>
            <person name="Ni P."/>
            <person name="Dong W."/>
            <person name="Hu S."/>
            <person name="Zeng C."/>
            <person name="Zhang J."/>
            <person name="Zhang Y."/>
            <person name="Li R."/>
            <person name="Xu Z."/>
            <person name="Li S."/>
            <person name="Li X."/>
            <person name="Zheng H."/>
            <person name="Cong L."/>
            <person name="Lin L."/>
            <person name="Yin J."/>
            <person name="Geng J."/>
            <person name="Li G."/>
            <person name="Shi J."/>
            <person name="Liu J."/>
            <person name="Lv H."/>
            <person name="Li J."/>
            <person name="Wang J."/>
            <person name="Deng Y."/>
            <person name="Ran L."/>
            <person name="Shi X."/>
            <person name="Wang X."/>
            <person name="Wu Q."/>
            <person name="Li C."/>
            <person name="Ren X."/>
            <person name="Wang J."/>
            <person name="Wang X."/>
            <person name="Li D."/>
            <person name="Liu D."/>
            <person name="Zhang X."/>
            <person name="Ji Z."/>
            <person name="Zhao W."/>
            <person name="Sun Y."/>
            <person name="Zhang Z."/>
            <person name="Bao J."/>
            <person name="Han Y."/>
            <person name="Dong L."/>
            <person name="Ji J."/>
            <person name="Chen P."/>
            <person name="Wu S."/>
            <person name="Liu J."/>
            <person name="Xiao Y."/>
            <person name="Bu D."/>
            <person name="Tan J."/>
            <person name="Yang L."/>
            <person name="Ye C."/>
            <person name="Zhang J."/>
            <person name="Xu J."/>
            <person name="Zhou Y."/>
            <person name="Yu Y."/>
            <person name="Zhang B."/>
            <person name="Zhuang S."/>
            <person name="Wei H."/>
            <person name="Liu B."/>
            <person name="Lei M."/>
            <person name="Yu H."/>
            <person name="Li Y."/>
            <person name="Xu H."/>
            <person name="Wei S."/>
            <person name="He X."/>
            <person name="Fang L."/>
            <person name="Zhang Z."/>
            <person name="Zhang Y."/>
            <person name="Huang X."/>
            <person name="Su Z."/>
            <person name="Tong W."/>
            <person name="Li J."/>
            <person name="Tong Z."/>
            <person name="Li S."/>
            <person name="Ye J."/>
            <person name="Wang L."/>
            <person name="Fang L."/>
            <person name="Lei T."/>
            <person name="Chen C.-S."/>
            <person name="Chen H.-C."/>
            <person name="Xu Z."/>
            <person name="Li H."/>
            <person name="Huang H."/>
            <person name="Zhang F."/>
            <person name="Xu H."/>
            <person name="Li N."/>
            <person name="Zhao C."/>
            <person name="Li S."/>
            <person name="Dong L."/>
            <person name="Huang Y."/>
            <person name="Li L."/>
            <person name="Xi Y."/>
            <person name="Qi Q."/>
            <person name="Li W."/>
            <person name="Zhang B."/>
            <person name="Hu W."/>
            <person name="Zhang Y."/>
            <person name="Tian X."/>
            <person name="Jiao Y."/>
            <person name="Liang X."/>
            <person name="Jin J."/>
            <person name="Gao L."/>
            <person name="Zheng W."/>
            <person name="Hao B."/>
            <person name="Liu S.-M."/>
            <person name="Wang W."/>
            <person name="Yuan L."/>
            <person name="Cao M."/>
            <person name="McDermott J."/>
            <person name="Samudrala R."/>
            <person name="Wang J."/>
            <person name="Wong G.K.-S."/>
            <person name="Yang H."/>
        </authorList>
    </citation>
    <scope>NUCLEOTIDE SEQUENCE [LARGE SCALE GENOMIC DNA]</scope>
    <source>
        <strain>cv. Nipponbare</strain>
    </source>
</reference>
<reference key="5">
    <citation type="journal article" date="2003" name="Science">
        <title>Collection, mapping, and annotation of over 28,000 cDNA clones from japonica rice.</title>
        <authorList>
            <consortium name="The rice full-length cDNA consortium"/>
        </authorList>
    </citation>
    <scope>NUCLEOTIDE SEQUENCE [LARGE SCALE MRNA]</scope>
    <source>
        <strain>cv. Nipponbare</strain>
    </source>
</reference>
<reference key="6">
    <citation type="journal article" date="2008" name="BMC Genomics">
        <title>Genome-wide and expression analysis of protein phosphatase 2C in rice and Arabidopsis.</title>
        <authorList>
            <person name="Xue T."/>
            <person name="Wang D."/>
            <person name="Zhang S."/>
            <person name="Ehlting J."/>
            <person name="Ni F."/>
            <person name="Jacab S."/>
            <person name="Zheng C."/>
            <person name="Zhong Y."/>
        </authorList>
    </citation>
    <scope>GENE FAMILY</scope>
    <scope>NOMENCLATURE</scope>
</reference>
<accession>Q6Z8B9</accession>
<accession>A0A0N7KEY6</accession>
<proteinExistence type="evidence at transcript level"/>
<dbReference type="EC" id="3.1.3.16"/>
<dbReference type="EMBL" id="AP004779">
    <property type="protein sequence ID" value="BAD17061.1"/>
    <property type="molecule type" value="Genomic_DNA"/>
</dbReference>
<dbReference type="EMBL" id="AP008208">
    <property type="protein sequence ID" value="BAF08246.1"/>
    <property type="molecule type" value="Genomic_DNA"/>
</dbReference>
<dbReference type="EMBL" id="AP014958">
    <property type="protein sequence ID" value="BAS77721.1"/>
    <property type="molecule type" value="Genomic_DNA"/>
</dbReference>
<dbReference type="EMBL" id="CM000139">
    <property type="protein sequence ID" value="EAZ22288.1"/>
    <property type="molecule type" value="Genomic_DNA"/>
</dbReference>
<dbReference type="EMBL" id="AK067205">
    <property type="protein sequence ID" value="BAG90314.1"/>
    <property type="molecule type" value="mRNA"/>
</dbReference>
<dbReference type="RefSeq" id="XP_015626790.1">
    <property type="nucleotide sequence ID" value="XM_015771304.1"/>
</dbReference>
<dbReference type="SMR" id="Q6Z8B9"/>
<dbReference type="FunCoup" id="Q6Z8B9">
    <property type="interactions" value="9"/>
</dbReference>
<dbReference type="STRING" id="39947.Q6Z8B9"/>
<dbReference type="PaxDb" id="39947-Q6Z8B9"/>
<dbReference type="EnsemblPlants" id="Os02t0224100-01">
    <property type="protein sequence ID" value="Os02t0224100-01"/>
    <property type="gene ID" value="Os02g0224100"/>
</dbReference>
<dbReference type="Gramene" id="Os02t0224100-01">
    <property type="protein sequence ID" value="Os02t0224100-01"/>
    <property type="gene ID" value="Os02g0224100"/>
</dbReference>
<dbReference type="KEGG" id="dosa:Os02g0224100"/>
<dbReference type="eggNOG" id="KOG0698">
    <property type="taxonomic scope" value="Eukaryota"/>
</dbReference>
<dbReference type="HOGENOM" id="CLU_013173_6_0_1"/>
<dbReference type="InParanoid" id="Q6Z8B9"/>
<dbReference type="OMA" id="VWAADSE"/>
<dbReference type="OrthoDB" id="10264738at2759"/>
<dbReference type="Proteomes" id="UP000000763">
    <property type="component" value="Chromosome 2"/>
</dbReference>
<dbReference type="Proteomes" id="UP000007752">
    <property type="component" value="Chromosome 2"/>
</dbReference>
<dbReference type="Proteomes" id="UP000059680">
    <property type="component" value="Chromosome 2"/>
</dbReference>
<dbReference type="ExpressionAtlas" id="Q6Z8B9">
    <property type="expression patterns" value="baseline and differential"/>
</dbReference>
<dbReference type="GO" id="GO:0046872">
    <property type="term" value="F:metal ion binding"/>
    <property type="evidence" value="ECO:0007669"/>
    <property type="project" value="UniProtKB-KW"/>
</dbReference>
<dbReference type="GO" id="GO:0004722">
    <property type="term" value="F:protein serine/threonine phosphatase activity"/>
    <property type="evidence" value="ECO:0000318"/>
    <property type="project" value="GO_Central"/>
</dbReference>
<dbReference type="GO" id="GO:1902531">
    <property type="term" value="P:regulation of intracellular signal transduction"/>
    <property type="evidence" value="ECO:0000318"/>
    <property type="project" value="GO_Central"/>
</dbReference>
<dbReference type="CDD" id="cd00143">
    <property type="entry name" value="PP2Cc"/>
    <property type="match status" value="1"/>
</dbReference>
<dbReference type="FunFam" id="3.60.40.10:FF:000063">
    <property type="entry name" value="Probable protein phosphatase 2C 12"/>
    <property type="match status" value="1"/>
</dbReference>
<dbReference type="Gene3D" id="3.60.40.10">
    <property type="entry name" value="PPM-type phosphatase domain"/>
    <property type="match status" value="1"/>
</dbReference>
<dbReference type="InterPro" id="IPR015655">
    <property type="entry name" value="PP2C"/>
</dbReference>
<dbReference type="InterPro" id="IPR036457">
    <property type="entry name" value="PPM-type-like_dom_sf"/>
</dbReference>
<dbReference type="InterPro" id="IPR001932">
    <property type="entry name" value="PPM-type_phosphatase-like_dom"/>
</dbReference>
<dbReference type="PANTHER" id="PTHR47992">
    <property type="entry name" value="PROTEIN PHOSPHATASE"/>
    <property type="match status" value="1"/>
</dbReference>
<dbReference type="Pfam" id="PF00481">
    <property type="entry name" value="PP2C"/>
    <property type="match status" value="1"/>
</dbReference>
<dbReference type="SMART" id="SM00332">
    <property type="entry name" value="PP2Cc"/>
    <property type="match status" value="1"/>
</dbReference>
<dbReference type="SUPFAM" id="SSF81606">
    <property type="entry name" value="PP2C-like"/>
    <property type="match status" value="1"/>
</dbReference>
<dbReference type="PROSITE" id="PS51746">
    <property type="entry name" value="PPM_2"/>
    <property type="match status" value="1"/>
</dbReference>